<reference key="1">
    <citation type="journal article" date="2008" name="Genome Res.">
        <title>Comparative genome analysis of Salmonella enteritidis PT4 and Salmonella gallinarum 287/91 provides insights into evolutionary and host adaptation pathways.</title>
        <authorList>
            <person name="Thomson N.R."/>
            <person name="Clayton D.J."/>
            <person name="Windhorst D."/>
            <person name="Vernikos G."/>
            <person name="Davidson S."/>
            <person name="Churcher C."/>
            <person name="Quail M.A."/>
            <person name="Stevens M."/>
            <person name="Jones M.A."/>
            <person name="Watson M."/>
            <person name="Barron A."/>
            <person name="Layton A."/>
            <person name="Pickard D."/>
            <person name="Kingsley R.A."/>
            <person name="Bignell A."/>
            <person name="Clark L."/>
            <person name="Harris B."/>
            <person name="Ormond D."/>
            <person name="Abdellah Z."/>
            <person name="Brooks K."/>
            <person name="Cherevach I."/>
            <person name="Chillingworth T."/>
            <person name="Woodward J."/>
            <person name="Norberczak H."/>
            <person name="Lord A."/>
            <person name="Arrowsmith C."/>
            <person name="Jagels K."/>
            <person name="Moule S."/>
            <person name="Mungall K."/>
            <person name="Saunders M."/>
            <person name="Whitehead S."/>
            <person name="Chabalgoity J.A."/>
            <person name="Maskell D."/>
            <person name="Humphreys T."/>
            <person name="Roberts M."/>
            <person name="Barrow P.A."/>
            <person name="Dougan G."/>
            <person name="Parkhill J."/>
        </authorList>
    </citation>
    <scope>NUCLEOTIDE SEQUENCE [LARGE SCALE GENOMIC DNA]</scope>
    <source>
        <strain>287/91 / NCTC 13346</strain>
    </source>
</reference>
<evidence type="ECO:0000255" key="1">
    <source>
        <dbReference type="HAMAP-Rule" id="MF_00123"/>
    </source>
</evidence>
<accession>B5R8C8</accession>
<name>SYR_SALG2</name>
<protein>
    <recommendedName>
        <fullName evidence="1">Arginine--tRNA ligase</fullName>
        <ecNumber evidence="1">6.1.1.19</ecNumber>
    </recommendedName>
    <alternativeName>
        <fullName evidence="1">Arginyl-tRNA synthetase</fullName>
        <shortName evidence="1">ArgRS</shortName>
    </alternativeName>
</protein>
<gene>
    <name evidence="1" type="primary">argS</name>
    <name type="ordered locus">SG1143</name>
</gene>
<sequence>MNIQALLSEKVSQAMIAAGAPADCEPQVRQSAKVQFGDYQANGMMAVAKKLGMAPRQLAEQVLTHLDLSGIASKVEIAGPGFINIFLEPAFLSEQVQQALTSDRLGVSQPTRQTIVVDYSAPNVAKEMHVGHLRSTIIGDAAVRTLEFLGHHVIRANHVGDWGTQFGMLIAWLEKQQQENAGDMALADLEGFYRDAKKHYDEDEAFAERARNYVVKLQSGDTYFREMWRKLVDITMTQNQITYDRLNVTLTRDDVMGESLYNPMLPGIVADLKAKGLAVESEGATVVFLDEFKNKEGDPMGVIIQKKDGGYLYTTTDIACAKYRYETLHADRVLYYIDSRQHQHLMQAWTIVRKAGYVPDSVPLEHHMFGMMLGKDGKPFKTRAGGTVKLADLLDEALERARRLVAEKNPDMSADELEKLANAVGIGAVKYADLSKNRTTDYIFDWDNMLAFEGNTAPYMQYAYTRVLSVFRKADIDEQALASAPVIISEDREAQLAARLLQFEETLTVVAREGTPHVMCAYLYDVAGLFSGFYEHCPILSAENDAVRNSRLKLAQLTAKTLKLGLDTLGIETVERM</sequence>
<dbReference type="EC" id="6.1.1.19" evidence="1"/>
<dbReference type="EMBL" id="AM933173">
    <property type="protein sequence ID" value="CAR37024.1"/>
    <property type="molecule type" value="Genomic_DNA"/>
</dbReference>
<dbReference type="RefSeq" id="WP_001025372.1">
    <property type="nucleotide sequence ID" value="NC_011274.1"/>
</dbReference>
<dbReference type="SMR" id="B5R8C8"/>
<dbReference type="KEGG" id="seg:SG1143"/>
<dbReference type="HOGENOM" id="CLU_006406_5_1_6"/>
<dbReference type="Proteomes" id="UP000008321">
    <property type="component" value="Chromosome"/>
</dbReference>
<dbReference type="GO" id="GO:0005737">
    <property type="term" value="C:cytoplasm"/>
    <property type="evidence" value="ECO:0007669"/>
    <property type="project" value="UniProtKB-SubCell"/>
</dbReference>
<dbReference type="GO" id="GO:0004814">
    <property type="term" value="F:arginine-tRNA ligase activity"/>
    <property type="evidence" value="ECO:0007669"/>
    <property type="project" value="UniProtKB-UniRule"/>
</dbReference>
<dbReference type="GO" id="GO:0005524">
    <property type="term" value="F:ATP binding"/>
    <property type="evidence" value="ECO:0007669"/>
    <property type="project" value="UniProtKB-UniRule"/>
</dbReference>
<dbReference type="GO" id="GO:0006420">
    <property type="term" value="P:arginyl-tRNA aminoacylation"/>
    <property type="evidence" value="ECO:0007669"/>
    <property type="project" value="UniProtKB-UniRule"/>
</dbReference>
<dbReference type="CDD" id="cd07956">
    <property type="entry name" value="Anticodon_Ia_Arg"/>
    <property type="match status" value="1"/>
</dbReference>
<dbReference type="CDD" id="cd00671">
    <property type="entry name" value="ArgRS_core"/>
    <property type="match status" value="1"/>
</dbReference>
<dbReference type="FunFam" id="1.10.730.10:FF:000001">
    <property type="entry name" value="Arginine--tRNA ligase"/>
    <property type="match status" value="1"/>
</dbReference>
<dbReference type="FunFam" id="3.30.1360.70:FF:000001">
    <property type="entry name" value="Arginine--tRNA ligase"/>
    <property type="match status" value="1"/>
</dbReference>
<dbReference type="FunFam" id="3.40.50.620:FF:000030">
    <property type="entry name" value="Arginine--tRNA ligase"/>
    <property type="match status" value="1"/>
</dbReference>
<dbReference type="Gene3D" id="3.30.1360.70">
    <property type="entry name" value="Arginyl tRNA synthetase N-terminal domain"/>
    <property type="match status" value="1"/>
</dbReference>
<dbReference type="Gene3D" id="3.40.50.620">
    <property type="entry name" value="HUPs"/>
    <property type="match status" value="1"/>
</dbReference>
<dbReference type="Gene3D" id="1.10.730.10">
    <property type="entry name" value="Isoleucyl-tRNA Synthetase, Domain 1"/>
    <property type="match status" value="1"/>
</dbReference>
<dbReference type="HAMAP" id="MF_00123">
    <property type="entry name" value="Arg_tRNA_synth"/>
    <property type="match status" value="1"/>
</dbReference>
<dbReference type="InterPro" id="IPR001412">
    <property type="entry name" value="aa-tRNA-synth_I_CS"/>
</dbReference>
<dbReference type="InterPro" id="IPR001278">
    <property type="entry name" value="Arg-tRNA-ligase"/>
</dbReference>
<dbReference type="InterPro" id="IPR005148">
    <property type="entry name" value="Arg-tRNA-synth_N"/>
</dbReference>
<dbReference type="InterPro" id="IPR036695">
    <property type="entry name" value="Arg-tRNA-synth_N_sf"/>
</dbReference>
<dbReference type="InterPro" id="IPR035684">
    <property type="entry name" value="ArgRS_core"/>
</dbReference>
<dbReference type="InterPro" id="IPR008909">
    <property type="entry name" value="DALR_anticod-bd"/>
</dbReference>
<dbReference type="InterPro" id="IPR014729">
    <property type="entry name" value="Rossmann-like_a/b/a_fold"/>
</dbReference>
<dbReference type="InterPro" id="IPR009080">
    <property type="entry name" value="tRNAsynth_Ia_anticodon-bd"/>
</dbReference>
<dbReference type="NCBIfam" id="TIGR00456">
    <property type="entry name" value="argS"/>
    <property type="match status" value="1"/>
</dbReference>
<dbReference type="PANTHER" id="PTHR11956:SF5">
    <property type="entry name" value="ARGININE--TRNA LIGASE, CYTOPLASMIC"/>
    <property type="match status" value="1"/>
</dbReference>
<dbReference type="PANTHER" id="PTHR11956">
    <property type="entry name" value="ARGINYL-TRNA SYNTHETASE"/>
    <property type="match status" value="1"/>
</dbReference>
<dbReference type="Pfam" id="PF03485">
    <property type="entry name" value="Arg_tRNA_synt_N"/>
    <property type="match status" value="1"/>
</dbReference>
<dbReference type="Pfam" id="PF05746">
    <property type="entry name" value="DALR_1"/>
    <property type="match status" value="1"/>
</dbReference>
<dbReference type="Pfam" id="PF00750">
    <property type="entry name" value="tRNA-synt_1d"/>
    <property type="match status" value="1"/>
</dbReference>
<dbReference type="PRINTS" id="PR01038">
    <property type="entry name" value="TRNASYNTHARG"/>
</dbReference>
<dbReference type="SMART" id="SM01016">
    <property type="entry name" value="Arg_tRNA_synt_N"/>
    <property type="match status" value="1"/>
</dbReference>
<dbReference type="SMART" id="SM00836">
    <property type="entry name" value="DALR_1"/>
    <property type="match status" value="1"/>
</dbReference>
<dbReference type="SUPFAM" id="SSF47323">
    <property type="entry name" value="Anticodon-binding domain of a subclass of class I aminoacyl-tRNA synthetases"/>
    <property type="match status" value="1"/>
</dbReference>
<dbReference type="SUPFAM" id="SSF55190">
    <property type="entry name" value="Arginyl-tRNA synthetase (ArgRS), N-terminal 'additional' domain"/>
    <property type="match status" value="1"/>
</dbReference>
<dbReference type="SUPFAM" id="SSF52374">
    <property type="entry name" value="Nucleotidylyl transferase"/>
    <property type="match status" value="1"/>
</dbReference>
<dbReference type="PROSITE" id="PS00178">
    <property type="entry name" value="AA_TRNA_LIGASE_I"/>
    <property type="match status" value="1"/>
</dbReference>
<keyword id="KW-0030">Aminoacyl-tRNA synthetase</keyword>
<keyword id="KW-0067">ATP-binding</keyword>
<keyword id="KW-0963">Cytoplasm</keyword>
<keyword id="KW-0436">Ligase</keyword>
<keyword id="KW-0547">Nucleotide-binding</keyword>
<keyword id="KW-0648">Protein biosynthesis</keyword>
<feature type="chain" id="PRO_1000095401" description="Arginine--tRNA ligase">
    <location>
        <begin position="1"/>
        <end position="577"/>
    </location>
</feature>
<feature type="short sequence motif" description="'HIGH' region">
    <location>
        <begin position="122"/>
        <end position="132"/>
    </location>
</feature>
<comment type="catalytic activity">
    <reaction evidence="1">
        <text>tRNA(Arg) + L-arginine + ATP = L-arginyl-tRNA(Arg) + AMP + diphosphate</text>
        <dbReference type="Rhea" id="RHEA:20301"/>
        <dbReference type="Rhea" id="RHEA-COMP:9658"/>
        <dbReference type="Rhea" id="RHEA-COMP:9673"/>
        <dbReference type="ChEBI" id="CHEBI:30616"/>
        <dbReference type="ChEBI" id="CHEBI:32682"/>
        <dbReference type="ChEBI" id="CHEBI:33019"/>
        <dbReference type="ChEBI" id="CHEBI:78442"/>
        <dbReference type="ChEBI" id="CHEBI:78513"/>
        <dbReference type="ChEBI" id="CHEBI:456215"/>
        <dbReference type="EC" id="6.1.1.19"/>
    </reaction>
</comment>
<comment type="subunit">
    <text evidence="1">Monomer.</text>
</comment>
<comment type="subcellular location">
    <subcellularLocation>
        <location evidence="1">Cytoplasm</location>
    </subcellularLocation>
</comment>
<comment type="similarity">
    <text evidence="1">Belongs to the class-I aminoacyl-tRNA synthetase family.</text>
</comment>
<organism>
    <name type="scientific">Salmonella gallinarum (strain 287/91 / NCTC 13346)</name>
    <dbReference type="NCBI Taxonomy" id="550538"/>
    <lineage>
        <taxon>Bacteria</taxon>
        <taxon>Pseudomonadati</taxon>
        <taxon>Pseudomonadota</taxon>
        <taxon>Gammaproteobacteria</taxon>
        <taxon>Enterobacterales</taxon>
        <taxon>Enterobacteriaceae</taxon>
        <taxon>Salmonella</taxon>
    </lineage>
</organism>
<proteinExistence type="inferred from homology"/>